<name>Y1931_MYCBO</name>
<reference key="1">
    <citation type="journal article" date="2003" name="Proc. Natl. Acad. Sci. U.S.A.">
        <title>The complete genome sequence of Mycobacterium bovis.</title>
        <authorList>
            <person name="Garnier T."/>
            <person name="Eiglmeier K."/>
            <person name="Camus J.-C."/>
            <person name="Medina N."/>
            <person name="Mansoor H."/>
            <person name="Pryor M."/>
            <person name="Duthoy S."/>
            <person name="Grondin S."/>
            <person name="Lacroix C."/>
            <person name="Monsempe C."/>
            <person name="Simon S."/>
            <person name="Harris B."/>
            <person name="Atkin R."/>
            <person name="Doggett J."/>
            <person name="Mayes R."/>
            <person name="Keating L."/>
            <person name="Wheeler P.R."/>
            <person name="Parkhill J."/>
            <person name="Barrell B.G."/>
            <person name="Cole S.T."/>
            <person name="Gordon S.V."/>
            <person name="Hewinson R.G."/>
        </authorList>
    </citation>
    <scope>NUCLEOTIDE SEQUENCE [LARGE SCALE GENOMIC DNA]</scope>
    <source>
        <strain>ATCC BAA-935 / AF2122/97</strain>
    </source>
</reference>
<reference key="2">
    <citation type="journal article" date="2017" name="Genome Announc.">
        <title>Updated reference genome sequence and annotation of Mycobacterium bovis AF2122/97.</title>
        <authorList>
            <person name="Malone K.M."/>
            <person name="Farrell D."/>
            <person name="Stuber T.P."/>
            <person name="Schubert O.T."/>
            <person name="Aebersold R."/>
            <person name="Robbe-Austerman S."/>
            <person name="Gordon S.V."/>
        </authorList>
    </citation>
    <scope>NUCLEOTIDE SEQUENCE [LARGE SCALE GENOMIC DNA]</scope>
    <scope>GENOME REANNOTATION</scope>
    <source>
        <strain>ATCC BAA-935 / AF2122/97</strain>
    </source>
</reference>
<gene>
    <name type="ordered locus">BQ2027_MB1931C</name>
</gene>
<dbReference type="EC" id="2.1.1.-"/>
<dbReference type="EMBL" id="LT708304">
    <property type="protein sequence ID" value="SIU00534.1"/>
    <property type="molecule type" value="Genomic_DNA"/>
</dbReference>
<dbReference type="RefSeq" id="NP_855582.1">
    <property type="nucleotide sequence ID" value="NC_002945.3"/>
</dbReference>
<dbReference type="RefSeq" id="WP_003409526.1">
    <property type="nucleotide sequence ID" value="NC_002945.4"/>
</dbReference>
<dbReference type="SMR" id="Q7TZC0"/>
<dbReference type="KEGG" id="mbo:BQ2027_MB1931C"/>
<dbReference type="PATRIC" id="fig|233413.5.peg.2118"/>
<dbReference type="Proteomes" id="UP000001419">
    <property type="component" value="Chromosome"/>
</dbReference>
<dbReference type="GO" id="GO:0008168">
    <property type="term" value="F:methyltransferase activity"/>
    <property type="evidence" value="ECO:0007669"/>
    <property type="project" value="UniProtKB-KW"/>
</dbReference>
<dbReference type="GO" id="GO:0032259">
    <property type="term" value="P:methylation"/>
    <property type="evidence" value="ECO:0007669"/>
    <property type="project" value="UniProtKB-KW"/>
</dbReference>
<dbReference type="Gene3D" id="3.40.50.150">
    <property type="entry name" value="Vaccinia Virus protein VP39"/>
    <property type="match status" value="1"/>
</dbReference>
<dbReference type="InterPro" id="IPR007213">
    <property type="entry name" value="Ppm1/Ppm2/Tcmp"/>
</dbReference>
<dbReference type="InterPro" id="IPR029063">
    <property type="entry name" value="SAM-dependent_MTases_sf"/>
</dbReference>
<dbReference type="InterPro" id="IPR011610">
    <property type="entry name" value="SAM_mthyl_Trfase_ML2640-like"/>
</dbReference>
<dbReference type="NCBIfam" id="TIGR00027">
    <property type="entry name" value="mthyl_TIGR00027"/>
    <property type="match status" value="1"/>
</dbReference>
<dbReference type="PANTHER" id="PTHR43619">
    <property type="entry name" value="S-ADENOSYL-L-METHIONINE-DEPENDENT METHYLTRANSFERASE YKTD-RELATED"/>
    <property type="match status" value="1"/>
</dbReference>
<dbReference type="PANTHER" id="PTHR43619:SF2">
    <property type="entry name" value="S-ADENOSYL-L-METHIONINE-DEPENDENT METHYLTRANSFERASES SUPERFAMILY PROTEIN"/>
    <property type="match status" value="1"/>
</dbReference>
<dbReference type="Pfam" id="PF04072">
    <property type="entry name" value="LCM"/>
    <property type="match status" value="1"/>
</dbReference>
<dbReference type="SUPFAM" id="SSF53335">
    <property type="entry name" value="S-adenosyl-L-methionine-dependent methyltransferases"/>
    <property type="match status" value="1"/>
</dbReference>
<evidence type="ECO:0000250" key="1"/>
<evidence type="ECO:0000305" key="2"/>
<organism>
    <name type="scientific">Mycobacterium bovis (strain ATCC BAA-935 / AF2122/97)</name>
    <dbReference type="NCBI Taxonomy" id="233413"/>
    <lineage>
        <taxon>Bacteria</taxon>
        <taxon>Bacillati</taxon>
        <taxon>Actinomycetota</taxon>
        <taxon>Actinomycetes</taxon>
        <taxon>Mycobacteriales</taxon>
        <taxon>Mycobacteriaceae</taxon>
        <taxon>Mycobacterium</taxon>
        <taxon>Mycobacterium tuberculosis complex</taxon>
    </lineage>
</organism>
<comment type="function">
    <text evidence="1">Exhibits S-adenosyl-L-methionine-dependent methyltransferase activity.</text>
</comment>
<comment type="similarity">
    <text evidence="2">Belongs to the UPF0677 family.</text>
</comment>
<protein>
    <recommendedName>
        <fullName>Putative S-adenosyl-L-methionine-dependent methyltransferase Mb1931c</fullName>
        <ecNumber>2.1.1.-</ecNumber>
    </recommendedName>
</protein>
<proteinExistence type="inferred from homology"/>
<accession>Q7TZC0</accession>
<accession>A0A1R3Y1S6</accession>
<accession>X2BJ91</accession>
<keyword id="KW-0489">Methyltransferase</keyword>
<keyword id="KW-1185">Reference proteome</keyword>
<keyword id="KW-0949">S-adenosyl-L-methionine</keyword>
<keyword id="KW-0808">Transferase</keyword>
<feature type="chain" id="PRO_0000361133" description="Putative S-adenosyl-L-methionine-dependent methyltransferase Mb1931c">
    <location>
        <begin position="1"/>
        <end position="303"/>
    </location>
</feature>
<feature type="binding site" evidence="1">
    <location>
        <position position="129"/>
    </location>
    <ligand>
        <name>S-adenosyl-L-methionine</name>
        <dbReference type="ChEBI" id="CHEBI:59789"/>
    </ligand>
</feature>
<feature type="binding site" evidence="1">
    <location>
        <begin position="158"/>
        <end position="159"/>
    </location>
    <ligand>
        <name>S-adenosyl-L-methionine</name>
        <dbReference type="ChEBI" id="CHEBI:59789"/>
    </ligand>
</feature>
<sequence>MTTPEYGSLRSDDDHWDIVSNVGYTALLVAGWRALHTTGPKPLVQDEYAKHFITASADPYLEGLLANPRTSEDGTAFPRLYGVQTRFFDDFFNCADEAGIRQAVIVAAGLDCRAYRLDWQPGTTVFEIDVPKVLEFKARVLSERGAVPKAHRVAVPADLRTDWPTPLTAAGFDPQRPSAWSVEGLLPYLTGDAQYALFARIDELCAPGSRVALGALGSRLDHEQLAALETAHPGVNMSGDVNFSALTYDDKTDPVEWLVEHGWAVDPVRSTLELQVGYGLTPPDVDVKIDSFMRSQYITAVRA</sequence>